<protein>
    <recommendedName>
        <fullName>Fructose-bisphosphate aldolase 1, chloroplastic</fullName>
        <ecNumber>4.1.2.13</ecNumber>
    </recommendedName>
</protein>
<gene>
    <name type="primary">ALDCHL</name>
    <name type="ORF">CHLREDRAFT_24459</name>
</gene>
<keyword id="KW-0002">3D-structure</keyword>
<keyword id="KW-0150">Chloroplast</keyword>
<keyword id="KW-0324">Glycolysis</keyword>
<keyword id="KW-0456">Lyase</keyword>
<keyword id="KW-0934">Plastid</keyword>
<keyword id="KW-0704">Schiff base</keyword>
<keyword id="KW-0809">Transit peptide</keyword>
<feature type="transit peptide" description="Chloroplast" evidence="2">
    <location>
        <begin position="1"/>
        <end status="unknown"/>
    </location>
</feature>
<feature type="chain" id="PRO_0000001111" description="Fructose-bisphosphate aldolase 1, chloroplastic">
    <location>
        <begin status="unknown"/>
        <end position="377"/>
    </location>
</feature>
<feature type="active site" description="Proton acceptor" evidence="1">
    <location>
        <position position="204"/>
    </location>
</feature>
<feature type="active site" description="Schiff-base intermediate with dihydroxyacetone-P" evidence="1">
    <location>
        <position position="246"/>
    </location>
</feature>
<feature type="binding site" evidence="1">
    <location>
        <position position="74"/>
    </location>
    <ligand>
        <name>substrate</name>
    </ligand>
</feature>
<feature type="binding site" evidence="1">
    <location>
        <position position="164"/>
    </location>
    <ligand>
        <name>substrate</name>
    </ligand>
</feature>
<feature type="site" description="Necessary for preference for fructose 1,6-bisphosphate over fructose 1-phosphate" evidence="1">
    <location>
        <position position="377"/>
    </location>
</feature>
<feature type="sequence conflict" description="In Ref. 1; AAC60574/CAA49590." evidence="3" ref="1">
    <original>AGRSRRAVVVRA</original>
    <variation>LAALAAPSLCAP</variation>
    <location>
        <begin position="16"/>
        <end position="27"/>
    </location>
</feature>
<feature type="sequence conflict" description="In Ref. 1; AAC60574/CAA49590." evidence="3" ref="1">
    <original>LSNTNGE</original>
    <variation>CPTPTM</variation>
    <location>
        <begin position="133"/>
        <end position="139"/>
    </location>
</feature>
<feature type="sequence conflict" description="In Ref. 1; AAC60574/CAA49590." evidence="3" ref="1">
    <original>LDKRC</original>
    <variation>WTSA</variation>
    <location>
        <begin position="148"/>
        <end position="152"/>
    </location>
</feature>
<feature type="sequence conflict" description="In Ref. 1; AAC60574/CAA49590." evidence="3" ref="1">
    <original>IAARDC</original>
    <variation>MLPRL</variation>
    <location>
        <begin position="178"/>
        <end position="183"/>
    </location>
</feature>
<feature type="sequence conflict" description="In Ref. 1; AAC60574/CAA49590." evidence="3" ref="1">
    <original>FE</original>
    <variation>LQ</variation>
    <location>
        <begin position="240"/>
        <end position="241"/>
    </location>
</feature>
<feature type="sequence conflict" description="In Ref. 1; AAC60574/CAA49590." evidence="3" ref="1">
    <original>RRRVPPA</original>
    <variation>AARAPP</variation>
    <location>
        <begin position="274"/>
        <end position="280"/>
    </location>
</feature>
<feature type="sequence conflict" description="In Ref. 1; AAC60574/CAA49590." evidence="3" ref="1">
    <original>Q</original>
    <variation>T</variation>
    <location>
        <position position="321"/>
    </location>
</feature>
<feature type="sequence conflict" description="In Ref. 1; AAC60574/CAA49590." evidence="3" ref="1">
    <original>GKPEN</original>
    <variation>ASPRT</variation>
    <location>
        <begin position="330"/>
        <end position="334"/>
    </location>
</feature>
<feature type="sequence conflict" description="In Ref. 1; AAC60574/CAA49590." evidence="3" ref="1">
    <original>AQAALLKRA</original>
    <variation>PRLAAQAR</variation>
    <location>
        <begin position="338"/>
        <end position="346"/>
    </location>
</feature>
<feature type="sequence conflict" description="In Ref. 1; AAC60574/CAA49590." evidence="3" ref="1">
    <original>G</original>
    <variation>GKG</variation>
    <location>
        <position position="374"/>
    </location>
</feature>
<feature type="helix" evidence="4">
    <location>
        <begin position="31"/>
        <end position="41"/>
    </location>
</feature>
<feature type="strand" evidence="4">
    <location>
        <begin position="47"/>
        <end position="51"/>
    </location>
</feature>
<feature type="helix" evidence="4">
    <location>
        <begin position="55"/>
        <end position="63"/>
    </location>
</feature>
<feature type="turn" evidence="4">
    <location>
        <begin position="64"/>
        <end position="66"/>
    </location>
</feature>
<feature type="helix" evidence="4">
    <location>
        <begin position="71"/>
        <end position="82"/>
    </location>
</feature>
<feature type="helix" evidence="4">
    <location>
        <begin position="87"/>
        <end position="89"/>
    </location>
</feature>
<feature type="strand" evidence="4">
    <location>
        <begin position="91"/>
        <end position="96"/>
    </location>
</feature>
<feature type="helix" evidence="4">
    <location>
        <begin position="100"/>
        <end position="102"/>
    </location>
</feature>
<feature type="helix" evidence="4">
    <location>
        <begin position="111"/>
        <end position="117"/>
    </location>
</feature>
<feature type="strand" evidence="4">
    <location>
        <begin position="121"/>
        <end position="125"/>
    </location>
</feature>
<feature type="strand" evidence="4">
    <location>
        <begin position="130"/>
        <end position="132"/>
    </location>
</feature>
<feature type="strand" evidence="4">
    <location>
        <begin position="136"/>
        <end position="138"/>
    </location>
</feature>
<feature type="strand" evidence="4">
    <location>
        <begin position="140"/>
        <end position="142"/>
    </location>
</feature>
<feature type="helix" evidence="4">
    <location>
        <begin position="148"/>
        <end position="157"/>
    </location>
</feature>
<feature type="strand" evidence="4">
    <location>
        <begin position="162"/>
        <end position="169"/>
    </location>
</feature>
<feature type="helix" evidence="4">
    <location>
        <begin position="177"/>
        <end position="197"/>
    </location>
</feature>
<feature type="strand" evidence="4">
    <location>
        <begin position="200"/>
        <end position="207"/>
    </location>
</feature>
<feature type="helix" evidence="4">
    <location>
        <begin position="215"/>
        <end position="235"/>
    </location>
</feature>
<feature type="helix" evidence="4">
    <location>
        <begin position="240"/>
        <end position="242"/>
    </location>
</feature>
<feature type="helix" evidence="4">
    <location>
        <begin position="262"/>
        <end position="274"/>
    </location>
</feature>
<feature type="strand" evidence="4">
    <location>
        <begin position="283"/>
        <end position="287"/>
    </location>
</feature>
<feature type="helix" evidence="4">
    <location>
        <begin position="293"/>
        <end position="302"/>
    </location>
</feature>
<feature type="strand" evidence="4">
    <location>
        <begin position="309"/>
        <end position="317"/>
    </location>
</feature>
<feature type="helix" evidence="4">
    <location>
        <begin position="318"/>
        <end position="328"/>
    </location>
</feature>
<feature type="helix" evidence="4">
    <location>
        <begin position="332"/>
        <end position="334"/>
    </location>
</feature>
<feature type="helix" evidence="4">
    <location>
        <begin position="335"/>
        <end position="353"/>
    </location>
</feature>
<dbReference type="EC" id="4.1.2.13"/>
<dbReference type="EMBL" id="X69969">
    <property type="protein sequence ID" value="CAA49590.1"/>
    <property type="molecule type" value="mRNA"/>
</dbReference>
<dbReference type="EMBL" id="S72951">
    <property type="protein sequence ID" value="AAC60574.1"/>
    <property type="molecule type" value="Genomic_DNA"/>
</dbReference>
<dbReference type="EMBL" id="X85495">
    <property type="status" value="NOT_ANNOTATED_CDS"/>
    <property type="molecule type" value="Genomic_DNA"/>
</dbReference>
<dbReference type="EMBL" id="DS496165">
    <property type="protein sequence ID" value="EDO97897.1"/>
    <property type="molecule type" value="Genomic_DNA"/>
</dbReference>
<dbReference type="PIR" id="S48639">
    <property type="entry name" value="S48639"/>
</dbReference>
<dbReference type="RefSeq" id="XP_001700659.1">
    <property type="nucleotide sequence ID" value="XM_001700607.1"/>
</dbReference>
<dbReference type="PDB" id="7B2N">
    <property type="method" value="X-ray"/>
    <property type="resolution" value="2.36 A"/>
    <property type="chains" value="A/B/C/D/E/F/G/H=28-377"/>
</dbReference>
<dbReference type="PDBsum" id="7B2N"/>
<dbReference type="SMR" id="Q42690"/>
<dbReference type="PaxDb" id="3055-EDO97897"/>
<dbReference type="ProMEX" id="Q42690"/>
<dbReference type="EnsemblPlants" id="PNW83518">
    <property type="protein sequence ID" value="PNW83518"/>
    <property type="gene ID" value="CHLRE_05g234550v5"/>
</dbReference>
<dbReference type="EnsemblPlants" id="PNW83519">
    <property type="protein sequence ID" value="PNW83519"/>
    <property type="gene ID" value="CHLRE_05g234550v5"/>
</dbReference>
<dbReference type="GeneID" id="5726208"/>
<dbReference type="Gramene" id="PNW83518">
    <property type="protein sequence ID" value="PNW83518"/>
    <property type="gene ID" value="CHLRE_05g234550v5"/>
</dbReference>
<dbReference type="Gramene" id="PNW83519">
    <property type="protein sequence ID" value="PNW83519"/>
    <property type="gene ID" value="CHLRE_05g234550v5"/>
</dbReference>
<dbReference type="KEGG" id="cre:CHLRE_05g234550v5"/>
<dbReference type="eggNOG" id="KOG1557">
    <property type="taxonomic scope" value="Eukaryota"/>
</dbReference>
<dbReference type="HOGENOM" id="CLU_031243_0_0_1"/>
<dbReference type="OMA" id="EVASMVW"/>
<dbReference type="OrthoDB" id="36455at2759"/>
<dbReference type="UniPathway" id="UPA00109">
    <property type="reaction ID" value="UER00183"/>
</dbReference>
<dbReference type="GO" id="GO:0009507">
    <property type="term" value="C:chloroplast"/>
    <property type="evidence" value="ECO:0007669"/>
    <property type="project" value="UniProtKB-SubCell"/>
</dbReference>
<dbReference type="GO" id="GO:0004332">
    <property type="term" value="F:fructose-bisphosphate aldolase activity"/>
    <property type="evidence" value="ECO:0007669"/>
    <property type="project" value="UniProtKB-EC"/>
</dbReference>
<dbReference type="GO" id="GO:0006096">
    <property type="term" value="P:glycolytic process"/>
    <property type="evidence" value="ECO:0007669"/>
    <property type="project" value="UniProtKB-UniPathway"/>
</dbReference>
<dbReference type="CDD" id="cd00948">
    <property type="entry name" value="FBP_aldolase_I_a"/>
    <property type="match status" value="1"/>
</dbReference>
<dbReference type="FunFam" id="3.20.20.70:FF:000052">
    <property type="entry name" value="Fructose-bisphosphate aldolase"/>
    <property type="match status" value="1"/>
</dbReference>
<dbReference type="Gene3D" id="3.20.20.70">
    <property type="entry name" value="Aldolase class I"/>
    <property type="match status" value="1"/>
</dbReference>
<dbReference type="InterPro" id="IPR013785">
    <property type="entry name" value="Aldolase_TIM"/>
</dbReference>
<dbReference type="InterPro" id="IPR000741">
    <property type="entry name" value="FBA_I"/>
</dbReference>
<dbReference type="NCBIfam" id="NF033379">
    <property type="entry name" value="FrucBisAld_I"/>
    <property type="match status" value="1"/>
</dbReference>
<dbReference type="PANTHER" id="PTHR11627">
    <property type="entry name" value="FRUCTOSE-BISPHOSPHATE ALDOLASE"/>
    <property type="match status" value="1"/>
</dbReference>
<dbReference type="Pfam" id="PF00274">
    <property type="entry name" value="Glycolytic"/>
    <property type="match status" value="1"/>
</dbReference>
<dbReference type="SUPFAM" id="SSF51569">
    <property type="entry name" value="Aldolase"/>
    <property type="match status" value="1"/>
</dbReference>
<reference key="1">
    <citation type="journal article" date="1994" name="Arch. Biochem. Biophys.">
        <title>Expression and sequence of the only detectable aldolase in Chlamydomonas reinhardtii.</title>
        <authorList>
            <person name="Schnarrenberger C."/>
            <person name="Pelzer-Reith B."/>
            <person name="Yatsuki H."/>
            <person name="Freund S."/>
            <person name="Jacobshagen S."/>
            <person name="Hori K."/>
        </authorList>
    </citation>
    <scope>NUCLEOTIDE SEQUENCE [GENOMIC DNA / MRNA]</scope>
</reference>
<reference key="2">
    <citation type="journal article" date="1995" name="Mol. Gen. Genet.">
        <title>The plastid aldolase gene from Chlamydomonas reinhardtii: intron/exon organization, evolution, and promoter structure.</title>
        <authorList>
            <person name="Pelzer-Reith B."/>
            <person name="Freund S."/>
            <person name="Schnarrenberger C."/>
            <person name="Yatsuki H."/>
            <person name="Hori K."/>
        </authorList>
    </citation>
    <scope>NUCLEOTIDE SEQUENCE [GENOMIC DNA]</scope>
</reference>
<reference key="3">
    <citation type="journal article" date="2007" name="Science">
        <title>The Chlamydomonas genome reveals the evolution of key animal and plant functions.</title>
        <authorList>
            <person name="Merchant S.S."/>
            <person name="Prochnik S.E."/>
            <person name="Vallon O."/>
            <person name="Harris E.H."/>
            <person name="Karpowicz S.J."/>
            <person name="Witman G.B."/>
            <person name="Terry A."/>
            <person name="Salamov A."/>
            <person name="Fritz-Laylin L.K."/>
            <person name="Marechal-Drouard L."/>
            <person name="Marshall W.F."/>
            <person name="Qu L.H."/>
            <person name="Nelson D.R."/>
            <person name="Sanderfoot A.A."/>
            <person name="Spalding M.H."/>
            <person name="Kapitonov V.V."/>
            <person name="Ren Q."/>
            <person name="Ferris P."/>
            <person name="Lindquist E."/>
            <person name="Shapiro H."/>
            <person name="Lucas S.M."/>
            <person name="Grimwood J."/>
            <person name="Schmutz J."/>
            <person name="Cardol P."/>
            <person name="Cerutti H."/>
            <person name="Chanfreau G."/>
            <person name="Chen C.L."/>
            <person name="Cognat V."/>
            <person name="Croft M.T."/>
            <person name="Dent R."/>
            <person name="Dutcher S."/>
            <person name="Fernandez E."/>
            <person name="Fukuzawa H."/>
            <person name="Gonzalez-Ballester D."/>
            <person name="Gonzalez-Halphen D."/>
            <person name="Hallmann A."/>
            <person name="Hanikenne M."/>
            <person name="Hippler M."/>
            <person name="Inwood W."/>
            <person name="Jabbari K."/>
            <person name="Kalanon M."/>
            <person name="Kuras R."/>
            <person name="Lefebvre P.A."/>
            <person name="Lemaire S.D."/>
            <person name="Lobanov A.V."/>
            <person name="Lohr M."/>
            <person name="Manuell A."/>
            <person name="Meier I."/>
            <person name="Mets L."/>
            <person name="Mittag M."/>
            <person name="Mittelmeier T."/>
            <person name="Moroney J.V."/>
            <person name="Moseley J."/>
            <person name="Napoli C."/>
            <person name="Nedelcu A.M."/>
            <person name="Niyogi K."/>
            <person name="Novoselov S.V."/>
            <person name="Paulsen I.T."/>
            <person name="Pazour G.J."/>
            <person name="Purton S."/>
            <person name="Ral J.P."/>
            <person name="Riano-Pachon D.M."/>
            <person name="Riekhof W."/>
            <person name="Rymarquis L."/>
            <person name="Schroda M."/>
            <person name="Stern D."/>
            <person name="Umen J."/>
            <person name="Willows R."/>
            <person name="Wilson N."/>
            <person name="Zimmer S.L."/>
            <person name="Allmer J."/>
            <person name="Balk J."/>
            <person name="Bisova K."/>
            <person name="Chen C.J."/>
            <person name="Elias M."/>
            <person name="Gendler K."/>
            <person name="Hauser C."/>
            <person name="Lamb M.R."/>
            <person name="Ledford H."/>
            <person name="Long J.C."/>
            <person name="Minagawa J."/>
            <person name="Page M.D."/>
            <person name="Pan J."/>
            <person name="Pootakham W."/>
            <person name="Roje S."/>
            <person name="Rose A."/>
            <person name="Stahlberg E."/>
            <person name="Terauchi A.M."/>
            <person name="Yang P."/>
            <person name="Ball S."/>
            <person name="Bowler C."/>
            <person name="Dieckmann C.L."/>
            <person name="Gladyshev V.N."/>
            <person name="Green P."/>
            <person name="Jorgensen R."/>
            <person name="Mayfield S."/>
            <person name="Mueller-Roeber B."/>
            <person name="Rajamani S."/>
            <person name="Sayre R.T."/>
            <person name="Brokstein P."/>
            <person name="Dubchak I."/>
            <person name="Goodstein D."/>
            <person name="Hornick L."/>
            <person name="Huang Y.W."/>
            <person name="Jhaveri J."/>
            <person name="Luo Y."/>
            <person name="Martinez D."/>
            <person name="Ngau W.C."/>
            <person name="Otillar B."/>
            <person name="Poliakov A."/>
            <person name="Porter A."/>
            <person name="Szajkowski L."/>
            <person name="Werner G."/>
            <person name="Zhou K."/>
            <person name="Grigoriev I.V."/>
            <person name="Rokhsar D.S."/>
            <person name="Grossman A.R."/>
        </authorList>
    </citation>
    <scope>NUCLEOTIDE SEQUENCE [LARGE SCALE GENOMIC DNA]</scope>
    <source>
        <strain>CC-503</strain>
    </source>
</reference>
<sequence>MALMMKSSASLKAVSAGRSRRAVVVRAGKYDEELIKTAGTVASKGRGILAMDESNATCGKRLDSIGVENTEENRRAYRELLVTAPGLGQYISGAILFEETLYQSTASGKKFVDVMKEQNIVPGIKVDKGLVPLSNTNGESWCMGLDGLDKRCAEYYKAGARFAKWRSVVSIPHGPSIIAARDCAYGLARYAAIAQNAGLVPIVEPEVLLDGEHDIDRCLEVQEAIWAETFKYMADNKVMFEGILLKPAMVTPGADCKNKAGPAKVAEYTLKMLRRRVPPAVPGIMFLSGGQSELESTLNLNAMNQSPNPWHVSFSYARALQNTVLKTWQGKPENVQAAQAALLKRAKANSDAQQGKYDATTEGKEAAQGMYEKGYVY</sequence>
<proteinExistence type="evidence at protein level"/>
<comment type="catalytic activity">
    <reaction>
        <text>beta-D-fructose 1,6-bisphosphate = D-glyceraldehyde 3-phosphate + dihydroxyacetone phosphate</text>
        <dbReference type="Rhea" id="RHEA:14729"/>
        <dbReference type="ChEBI" id="CHEBI:32966"/>
        <dbReference type="ChEBI" id="CHEBI:57642"/>
        <dbReference type="ChEBI" id="CHEBI:59776"/>
        <dbReference type="EC" id="4.1.2.13"/>
    </reaction>
</comment>
<comment type="pathway">
    <text>Carbohydrate degradation; glycolysis; D-glyceraldehyde 3-phosphate and glycerone phosphate from D-glucose: step 4/4.</text>
</comment>
<comment type="subcellular location">
    <subcellularLocation>
        <location>Plastid</location>
        <location>Chloroplast</location>
    </subcellularLocation>
</comment>
<comment type="similarity">
    <text evidence="3">Belongs to the class I fructose-bisphosphate aldolase family.</text>
</comment>
<organism>
    <name type="scientific">Chlamydomonas reinhardtii</name>
    <name type="common">Chlamydomonas smithii</name>
    <dbReference type="NCBI Taxonomy" id="3055"/>
    <lineage>
        <taxon>Eukaryota</taxon>
        <taxon>Viridiplantae</taxon>
        <taxon>Chlorophyta</taxon>
        <taxon>core chlorophytes</taxon>
        <taxon>Chlorophyceae</taxon>
        <taxon>CS clade</taxon>
        <taxon>Chlamydomonadales</taxon>
        <taxon>Chlamydomonadaceae</taxon>
        <taxon>Chlamydomonas</taxon>
    </lineage>
</organism>
<accession>Q42690</accession>
<accession>A8JE10</accession>
<accession>Q36725</accession>
<name>ALFC_CHLRE</name>
<evidence type="ECO:0000250" key="1"/>
<evidence type="ECO:0000255" key="2"/>
<evidence type="ECO:0000305" key="3"/>
<evidence type="ECO:0007829" key="4">
    <source>
        <dbReference type="PDB" id="7B2N"/>
    </source>
</evidence>